<feature type="chain" id="PRO_0000349068" description="Heme A synthase">
    <location>
        <begin position="1"/>
        <end position="362"/>
    </location>
</feature>
<feature type="transmembrane region" description="Helical" evidence="1">
    <location>
        <begin position="12"/>
        <end position="32"/>
    </location>
</feature>
<feature type="transmembrane region" description="Helical" evidence="1">
    <location>
        <begin position="102"/>
        <end position="122"/>
    </location>
</feature>
<feature type="transmembrane region" description="Helical" evidence="1">
    <location>
        <begin position="128"/>
        <end position="148"/>
    </location>
</feature>
<feature type="transmembrane region" description="Helical" evidence="1">
    <location>
        <begin position="159"/>
        <end position="179"/>
    </location>
</feature>
<feature type="transmembrane region" description="Helical" evidence="1">
    <location>
        <begin position="198"/>
        <end position="218"/>
    </location>
</feature>
<feature type="transmembrane region" description="Helical" evidence="1">
    <location>
        <begin position="264"/>
        <end position="281"/>
    </location>
</feature>
<feature type="transmembrane region" description="Helical" evidence="1">
    <location>
        <begin position="289"/>
        <end position="309"/>
    </location>
</feature>
<feature type="transmembrane region" description="Helical" evidence="1">
    <location>
        <begin position="312"/>
        <end position="332"/>
    </location>
</feature>
<feature type="binding site" description="axial binding residue" evidence="1">
    <location>
        <position position="262"/>
    </location>
    <ligand>
        <name>heme</name>
        <dbReference type="ChEBI" id="CHEBI:30413"/>
    </ligand>
    <ligandPart>
        <name>Fe</name>
        <dbReference type="ChEBI" id="CHEBI:18248"/>
    </ligandPart>
</feature>
<feature type="binding site" description="axial binding residue" evidence="1">
    <location>
        <position position="320"/>
    </location>
    <ligand>
        <name>heme</name>
        <dbReference type="ChEBI" id="CHEBI:30413"/>
    </ligand>
    <ligandPart>
        <name>Fe</name>
        <dbReference type="ChEBI" id="CHEBI:18248"/>
    </ligandPart>
</feature>
<name>CTAA_RHOPB</name>
<proteinExistence type="inferred from homology"/>
<keyword id="KW-1003">Cell membrane</keyword>
<keyword id="KW-0350">Heme biosynthesis</keyword>
<keyword id="KW-0408">Iron</keyword>
<keyword id="KW-0472">Membrane</keyword>
<keyword id="KW-0479">Metal-binding</keyword>
<keyword id="KW-0560">Oxidoreductase</keyword>
<keyword id="KW-0812">Transmembrane</keyword>
<keyword id="KW-1133">Transmembrane helix</keyword>
<accession>Q214F0</accession>
<organism>
    <name type="scientific">Rhodopseudomonas palustris (strain BisB18)</name>
    <dbReference type="NCBI Taxonomy" id="316056"/>
    <lineage>
        <taxon>Bacteria</taxon>
        <taxon>Pseudomonadati</taxon>
        <taxon>Pseudomonadota</taxon>
        <taxon>Alphaproteobacteria</taxon>
        <taxon>Hyphomicrobiales</taxon>
        <taxon>Nitrobacteraceae</taxon>
        <taxon>Rhodopseudomonas</taxon>
    </lineage>
</organism>
<gene>
    <name evidence="1" type="primary">ctaA</name>
    <name type="ordered locus">RPC_2687</name>
</gene>
<dbReference type="EC" id="1.17.99.9" evidence="1"/>
<dbReference type="EMBL" id="CP000301">
    <property type="protein sequence ID" value="ABD88236.1"/>
    <property type="molecule type" value="Genomic_DNA"/>
</dbReference>
<dbReference type="SMR" id="Q214F0"/>
<dbReference type="STRING" id="316056.RPC_2687"/>
<dbReference type="KEGG" id="rpc:RPC_2687"/>
<dbReference type="eggNOG" id="COG1612">
    <property type="taxonomic scope" value="Bacteria"/>
</dbReference>
<dbReference type="HOGENOM" id="CLU_017627_0_0_5"/>
<dbReference type="OrthoDB" id="9793156at2"/>
<dbReference type="UniPathway" id="UPA00269">
    <property type="reaction ID" value="UER00713"/>
</dbReference>
<dbReference type="GO" id="GO:0005886">
    <property type="term" value="C:plasma membrane"/>
    <property type="evidence" value="ECO:0007669"/>
    <property type="project" value="UniProtKB-SubCell"/>
</dbReference>
<dbReference type="GO" id="GO:0046872">
    <property type="term" value="F:metal ion binding"/>
    <property type="evidence" value="ECO:0007669"/>
    <property type="project" value="UniProtKB-KW"/>
</dbReference>
<dbReference type="GO" id="GO:0016653">
    <property type="term" value="F:oxidoreductase activity, acting on NAD(P)H, heme protein as acceptor"/>
    <property type="evidence" value="ECO:0007669"/>
    <property type="project" value="InterPro"/>
</dbReference>
<dbReference type="GO" id="GO:0006784">
    <property type="term" value="P:heme A biosynthetic process"/>
    <property type="evidence" value="ECO:0007669"/>
    <property type="project" value="UniProtKB-UniRule"/>
</dbReference>
<dbReference type="HAMAP" id="MF_01665">
    <property type="entry name" value="HemeA_synth_type2"/>
    <property type="match status" value="1"/>
</dbReference>
<dbReference type="InterPro" id="IPR003780">
    <property type="entry name" value="COX15/CtaA_fam"/>
</dbReference>
<dbReference type="InterPro" id="IPR023754">
    <property type="entry name" value="HemeA_Synthase_type2"/>
</dbReference>
<dbReference type="PANTHER" id="PTHR23289">
    <property type="entry name" value="CYTOCHROME C OXIDASE ASSEMBLY PROTEIN COX15"/>
    <property type="match status" value="1"/>
</dbReference>
<dbReference type="PANTHER" id="PTHR23289:SF2">
    <property type="entry name" value="CYTOCHROME C OXIDASE ASSEMBLY PROTEIN COX15 HOMOLOG"/>
    <property type="match status" value="1"/>
</dbReference>
<dbReference type="Pfam" id="PF02628">
    <property type="entry name" value="COX15-CtaA"/>
    <property type="match status" value="1"/>
</dbReference>
<protein>
    <recommendedName>
        <fullName evidence="1">Heme A synthase</fullName>
        <shortName evidence="1">HAS</shortName>
        <ecNumber evidence="1">1.17.99.9</ecNumber>
    </recommendedName>
    <alternativeName>
        <fullName evidence="1">Cytochrome aa3-controlling protein</fullName>
    </alternativeName>
</protein>
<comment type="function">
    <text evidence="1">Catalyzes the conversion of heme O to heme A by two successive hydroxylations of the methyl group at C8. The first hydroxylation forms heme I, the second hydroxylation results in an unstable dihydroxymethyl group, which spontaneously dehydrates, resulting in the formyl group of heme A.</text>
</comment>
<comment type="catalytic activity">
    <reaction evidence="1">
        <text>Fe(II)-heme o + 2 A + H2O = Fe(II)-heme a + 2 AH2</text>
        <dbReference type="Rhea" id="RHEA:63388"/>
        <dbReference type="ChEBI" id="CHEBI:13193"/>
        <dbReference type="ChEBI" id="CHEBI:15377"/>
        <dbReference type="ChEBI" id="CHEBI:17499"/>
        <dbReference type="ChEBI" id="CHEBI:60530"/>
        <dbReference type="ChEBI" id="CHEBI:61715"/>
        <dbReference type="EC" id="1.17.99.9"/>
    </reaction>
    <physiologicalReaction direction="left-to-right" evidence="1">
        <dbReference type="Rhea" id="RHEA:63389"/>
    </physiologicalReaction>
</comment>
<comment type="cofactor">
    <cofactor evidence="1">
        <name>heme b</name>
        <dbReference type="ChEBI" id="CHEBI:60344"/>
    </cofactor>
</comment>
<comment type="pathway">
    <text evidence="1">Porphyrin-containing compound metabolism; heme A biosynthesis; heme A from heme O: step 1/1.</text>
</comment>
<comment type="subunit">
    <text evidence="1">Interacts with CtaB.</text>
</comment>
<comment type="subcellular location">
    <subcellularLocation>
        <location evidence="1">Cell membrane</location>
        <topology evidence="1">Multi-pass membrane protein</topology>
    </subcellularLocation>
</comment>
<comment type="similarity">
    <text evidence="1">Belongs to the COX15/CtaA family. Type 2 subfamily.</text>
</comment>
<reference key="1">
    <citation type="submission" date="2006-03" db="EMBL/GenBank/DDBJ databases">
        <title>Complete sequence of Rhodopseudomonas palustris BisB18.</title>
        <authorList>
            <consortium name="US DOE Joint Genome Institute"/>
            <person name="Copeland A."/>
            <person name="Lucas S."/>
            <person name="Lapidus A."/>
            <person name="Barry K."/>
            <person name="Detter J.C."/>
            <person name="Glavina del Rio T."/>
            <person name="Hammon N."/>
            <person name="Israni S."/>
            <person name="Dalin E."/>
            <person name="Tice H."/>
            <person name="Pitluck S."/>
            <person name="Chain P."/>
            <person name="Malfatti S."/>
            <person name="Shin M."/>
            <person name="Vergez L."/>
            <person name="Schmutz J."/>
            <person name="Larimer F."/>
            <person name="Land M."/>
            <person name="Hauser L."/>
            <person name="Pelletier D.A."/>
            <person name="Kyrpides N."/>
            <person name="Anderson I."/>
            <person name="Oda Y."/>
            <person name="Harwood C.S."/>
            <person name="Richardson P."/>
        </authorList>
    </citation>
    <scope>NUCLEOTIDE SEQUENCE [LARGE SCALE GENOMIC DNA]</scope>
    <source>
        <strain>BisB18</strain>
    </source>
</reference>
<sequence>MPAVPADRPMHAVRIWLAIIAGLIAVMVLVGGATRLTESGLSIVEWKPITGTLPPLSVEQWTQAFDAYKTIPQYRELNAGMTLAQFKTIFWWEWSHRLLGRVIGAAFLLPFLWFLWRGDLGGGLKRRLWIIFGLGALQGAVGWWMVASGLSQRVEVSQVRLATHLVLALLIFAGIVWTLRQLTPRPAIVAPLRLRLTAAVLLGLTFVQLYLGALVAGLRAGRIYNTWPQIDGALIPSAARLWFEQPWWKNLFDNHLTVQFDHRMLAYALWALAVLHAIDAWRARAAAGGALALAVAITLQAALGIVTLLYAVPIGLGLAHQAMAILVLTLAVLQLARFSPGVVQTAQHAAAPSLGQPAQGRG</sequence>
<evidence type="ECO:0000255" key="1">
    <source>
        <dbReference type="HAMAP-Rule" id="MF_01665"/>
    </source>
</evidence>